<comment type="function">
    <text evidence="1">Component of the exocyst complex involved in the docking of exocytic vesicles with fusion sites on the plasma membrane.</text>
</comment>
<comment type="subunit">
    <text evidence="1 2 6">The exocyst complex is composed of EXOC1, EXOC2, EXOC3, EXOC4, EXOC5, EXOC6, EXOC7 and EXOC8 (By similarity). Interacts with BIRC6/bruce (By similarity). Interacts with MYRIP. Interacts with SH3BP1; required for the localization of both SH3BP1 and the exocyst to the leading edge of migrating cells (By similarity). Interacts with SLC6A9 (By similarity).</text>
</comment>
<comment type="interaction">
    <interactant intactId="EBI-772648">
        <id>O35382</id>
    </interactant>
    <interactant intactId="EBI-775332">
        <id>O35250</id>
        <label>Exoc7</label>
    </interactant>
    <organismsDiffer>false</organismsDiffer>
    <experiments>2</experiments>
</comment>
<comment type="subcellular location">
    <subcellularLocation>
        <location evidence="2">Midbody</location>
        <location evidence="2">Midbody ring</location>
    </subcellularLocation>
    <subcellularLocation>
        <location evidence="1">Cell projection</location>
    </subcellularLocation>
    <subcellularLocation>
        <location evidence="2">Cytoplasm</location>
        <location evidence="2">Cytoskeleton</location>
        <location evidence="2">Microtubule organizing center</location>
        <location evidence="2">Centrosome</location>
    </subcellularLocation>
    <text evidence="1 2">Colocalizes with CNTRL/centriolin at the midbody ring (By similarity). Localizes at the leading edge of migrating cells (By similarity).</text>
</comment>
<comment type="tissue specificity">
    <text evidence="5">Expressed in the striatum (at protein level).</text>
</comment>
<comment type="similarity">
    <text evidence="7">Belongs to the SEC8 family.</text>
</comment>
<protein>
    <recommendedName>
        <fullName>Exocyst complex component 4</fullName>
    </recommendedName>
    <alternativeName>
        <fullName>Exocyst complex component Sec8</fullName>
    </alternativeName>
</protein>
<keyword id="KW-0007">Acetylation</keyword>
<keyword id="KW-0966">Cell projection</keyword>
<keyword id="KW-0175">Coiled coil</keyword>
<keyword id="KW-0963">Cytoplasm</keyword>
<keyword id="KW-0206">Cytoskeleton</keyword>
<keyword id="KW-0268">Exocytosis</keyword>
<keyword id="KW-0597">Phosphoprotein</keyword>
<keyword id="KW-0653">Protein transport</keyword>
<keyword id="KW-1185">Reference proteome</keyword>
<keyword id="KW-0813">Transport</keyword>
<organism>
    <name type="scientific">Mus musculus</name>
    <name type="common">Mouse</name>
    <dbReference type="NCBI Taxonomy" id="10090"/>
    <lineage>
        <taxon>Eukaryota</taxon>
        <taxon>Metazoa</taxon>
        <taxon>Chordata</taxon>
        <taxon>Craniata</taxon>
        <taxon>Vertebrata</taxon>
        <taxon>Euteleostomi</taxon>
        <taxon>Mammalia</taxon>
        <taxon>Eutheria</taxon>
        <taxon>Euarchontoglires</taxon>
        <taxon>Glires</taxon>
        <taxon>Rodentia</taxon>
        <taxon>Myomorpha</taxon>
        <taxon>Muroidea</taxon>
        <taxon>Muridae</taxon>
        <taxon>Murinae</taxon>
        <taxon>Mus</taxon>
        <taxon>Mus</taxon>
    </lineage>
</organism>
<reference key="1">
    <citation type="journal article" date="1997" name="Dev. Biol.">
        <title>The secretory protein Sec8 is required for paraxial mesoderm formation in the mouse.</title>
        <authorList>
            <person name="Friedrich G.A."/>
            <person name="Hildebrand J.D."/>
            <person name="Soriano P."/>
        </authorList>
    </citation>
    <scope>NUCLEOTIDE SEQUENCE [MRNA]</scope>
    <source>
        <strain>129/Sv</strain>
    </source>
</reference>
<reference key="2">
    <citation type="journal article" date="2004" name="Genome Res.">
        <title>The status, quality, and expansion of the NIH full-length cDNA project: the Mammalian Gene Collection (MGC).</title>
        <authorList>
            <consortium name="The MGC Project Team"/>
        </authorList>
    </citation>
    <scope>NUCLEOTIDE SEQUENCE [LARGE SCALE MRNA]</scope>
    <source>
        <strain>FVB/N</strain>
    </source>
</reference>
<reference key="3">
    <citation type="journal article" date="2007" name="J. Biol. Chem.">
        <title>MyRIP anchors protein kinase A to the exocyst complex.</title>
        <authorList>
            <person name="Goehring A.S."/>
            <person name="Pedroja B.S."/>
            <person name="Hinke S.A."/>
            <person name="Langeberg L.K."/>
            <person name="Scott J.D."/>
        </authorList>
    </citation>
    <scope>INTERACTION WITH MYRIP</scope>
</reference>
<reference key="4">
    <citation type="journal article" date="2007" name="Neuron">
        <title>Sept4, a component of presynaptic scaffold and Lewy bodies, is required for the suppression of alpha-synuclein neurotoxicity.</title>
        <authorList>
            <person name="Ihara M."/>
            <person name="Yamasaki N."/>
            <person name="Hagiwara A."/>
            <person name="Tanigaki A."/>
            <person name="Kitano A."/>
            <person name="Hikawa R."/>
            <person name="Tomimoto H."/>
            <person name="Noda M."/>
            <person name="Takanashi M."/>
            <person name="Mori H."/>
            <person name="Hattori N."/>
            <person name="Miyakawa T."/>
            <person name="Kinoshita M."/>
        </authorList>
    </citation>
    <scope>TISSUE SPECIFICITY</scope>
</reference>
<reference key="5">
    <citation type="journal article" date="2010" name="Cell">
        <title>A tissue-specific atlas of mouse protein phosphorylation and expression.</title>
        <authorList>
            <person name="Huttlin E.L."/>
            <person name="Jedrychowski M.P."/>
            <person name="Elias J.E."/>
            <person name="Goswami T."/>
            <person name="Rad R."/>
            <person name="Beausoleil S.A."/>
            <person name="Villen J."/>
            <person name="Haas W."/>
            <person name="Sowa M.E."/>
            <person name="Gygi S.P."/>
        </authorList>
    </citation>
    <scope>PHOSPHORYLATION [LARGE SCALE ANALYSIS] AT SER-469</scope>
    <scope>IDENTIFICATION BY MASS SPECTROMETRY [LARGE SCALE ANALYSIS]</scope>
    <source>
        <tissue>Brain</tissue>
        <tissue>Brown adipose tissue</tissue>
        <tissue>Heart</tissue>
        <tissue>Kidney</tissue>
        <tissue>Liver</tissue>
        <tissue>Lung</tissue>
        <tissue>Pancreas</tissue>
        <tissue>Spleen</tissue>
        <tissue>Testis</tissue>
    </source>
</reference>
<feature type="initiator methionine" description="Removed" evidence="2">
    <location>
        <position position="1"/>
    </location>
</feature>
<feature type="chain" id="PRO_0000118935" description="Exocyst complex component 4">
    <location>
        <begin position="2"/>
        <end position="975"/>
    </location>
</feature>
<feature type="region of interest" description="Disordered" evidence="4">
    <location>
        <begin position="211"/>
        <end position="230"/>
    </location>
</feature>
<feature type="coiled-coil region" evidence="3">
    <location>
        <begin position="32"/>
        <end position="114"/>
    </location>
</feature>
<feature type="compositionally biased region" description="Basic and acidic residues" evidence="4">
    <location>
        <begin position="211"/>
        <end position="224"/>
    </location>
</feature>
<feature type="modified residue" description="N-acetylalanine" evidence="2">
    <location>
        <position position="2"/>
    </location>
</feature>
<feature type="modified residue" description="N6-acetyllysine" evidence="2">
    <location>
        <position position="9"/>
    </location>
</feature>
<feature type="modified residue" description="Phosphoserine" evidence="2">
    <location>
        <position position="32"/>
    </location>
</feature>
<feature type="modified residue" description="Phosphoserine" evidence="2">
    <location>
        <position position="226"/>
    </location>
</feature>
<feature type="modified residue" description="Phosphothreonine" evidence="2">
    <location>
        <position position="238"/>
    </location>
</feature>
<feature type="modified residue" description="Phosphoserine" evidence="8">
    <location>
        <position position="469"/>
    </location>
</feature>
<feature type="sequence conflict" description="In Ref. 1; AAB86537." evidence="7" ref="1">
    <original>G</original>
    <variation>A</variation>
    <location>
        <position position="692"/>
    </location>
</feature>
<feature type="sequence conflict" description="In Ref. 1; AAB86537." evidence="7" ref="1">
    <original>S</original>
    <variation>R</variation>
    <location>
        <position position="717"/>
    </location>
</feature>
<feature type="sequence conflict" description="In Ref. 1; AAB86537." evidence="7" ref="1">
    <original>S</original>
    <variation>T</variation>
    <location>
        <position position="832"/>
    </location>
</feature>
<feature type="sequence conflict" description="In Ref. 1; AAB86537." evidence="7" ref="1">
    <original>RLQRLKEIICEQAAIKQATKDKKITTV</original>
    <variation>SCRDSRRSSVSRLPSSKPPRTRK</variation>
    <location>
        <begin position="949"/>
        <end position="975"/>
    </location>
</feature>
<name>EXOC4_MOUSE</name>
<evidence type="ECO:0000250" key="1">
    <source>
        <dbReference type="UniProtKB" id="Q62824"/>
    </source>
</evidence>
<evidence type="ECO:0000250" key="2">
    <source>
        <dbReference type="UniProtKB" id="Q96A65"/>
    </source>
</evidence>
<evidence type="ECO:0000255" key="3"/>
<evidence type="ECO:0000256" key="4">
    <source>
        <dbReference type="SAM" id="MobiDB-lite"/>
    </source>
</evidence>
<evidence type="ECO:0000269" key="5">
    <source>
    </source>
</evidence>
<evidence type="ECO:0000269" key="6">
    <source>
    </source>
</evidence>
<evidence type="ECO:0000305" key="7"/>
<evidence type="ECO:0007744" key="8">
    <source>
    </source>
</evidence>
<gene>
    <name type="primary">Exoc4</name>
    <name type="synonym">Sec8</name>
    <name type="synonym">Sec8l1</name>
</gene>
<accession>O35382</accession>
<proteinExistence type="evidence at protein level"/>
<sequence>MAAEAAGGKYRSTVSKSKDPSGLLISVIRTLSTSDDVEDRENEKGRLEEAYEKCDRDLDELIVQHYTELTTAIRTYQSITERITNSRNKIKQVKENLLSCKMLLHCKRDELRKLWIEGIEHKHVLNLLDEIENIKQVPQKLEQCMASKHYLSATDMLVSAVESLEGPLLQVEGLSDLRLELHSKKMNLHLVLIEELHRHLYIKSTSRVVQRNKEKGKMSSHGKDPSPGPLIDVSNIPTPRKFLDASQYSAAGGSSVREMNLQDVKEDLECDPEENSTLFMGILIQGLARLKKIPETVKAIKERLEQELKQIVKRSTTQVADSAYQRGESLTVDNQPRLLLELLELLFDKFNAVATAHSVVLGYLQDSVGTQLTQQEEIKLYDMADVWVKIQDVLQMLLTEYLDMKNTRTASEPSAQLSYASTGREFAAFFAKKKPQRPKNSLFKFESSSHAISMSAYLREQRRELYSRSGELQGGPDDNLIEGGGTKFVCKPGARNITVIFHPLLRFIQEIEHALGLGPAKQCPLREFLTVYIKSIFLNQVLAEINKEIEGVTKTSDPLKILANADTMKVLGVQRPLLQSTIIVEKTVQDLMNLMHDLSAYSDQFLNMVCVKLQEYKDTCSTAYRGIVQSEEKLVISASWAKDDDISRLLKSLPNWTNMAQPKQLRPKREEEEDFIRAAFGKESEVLIGNLGDKLIPPQDILRDVSDLKALANMHESLEWLAGRTKSAFSNLSTSQMLSPAQESHVNMDLPPVSEQIMQTLSELAKTFQDMADRCLLVLHLEVRVHCFHYLIPLAKEGNYAIVANVESMDYDPLVVKLNKDISAMEEAMSASLQQHKFQYIFEGLGHLISCILINGAQYFRRISESGIKKMCRNIFVLQQNLTNITMSREADLDFARQYYEMLYNTADELLNLVVDQGVKYTELEYIHALTLLHRSQTGVGDQTTQNTRLQRLKEIICEQAAIKQATKDKKITTV</sequence>
<dbReference type="EMBL" id="AF022962">
    <property type="protein sequence ID" value="AAB86537.1"/>
    <property type="molecule type" value="mRNA"/>
</dbReference>
<dbReference type="EMBL" id="BC034644">
    <property type="protein sequence ID" value="AAH34644.1"/>
    <property type="molecule type" value="mRNA"/>
</dbReference>
<dbReference type="CCDS" id="CCDS19987.1"/>
<dbReference type="RefSeq" id="NP_033174.2">
    <property type="nucleotide sequence ID" value="NM_009148.4"/>
</dbReference>
<dbReference type="SMR" id="O35382"/>
<dbReference type="BioGRID" id="203152">
    <property type="interactions" value="21"/>
</dbReference>
<dbReference type="ComplexPortal" id="CPX-4982">
    <property type="entry name" value="Exocyst, Exoc6 variant"/>
</dbReference>
<dbReference type="ComplexPortal" id="CPX-4983">
    <property type="entry name" value="Exocyst, Exoc6b variant"/>
</dbReference>
<dbReference type="DIP" id="DIP-32368N"/>
<dbReference type="FunCoup" id="O35382">
    <property type="interactions" value="2751"/>
</dbReference>
<dbReference type="IntAct" id="O35382">
    <property type="interactions" value="9"/>
</dbReference>
<dbReference type="MINT" id="O35382"/>
<dbReference type="STRING" id="10090.ENSMUSP00000051965"/>
<dbReference type="GlyGen" id="O35382">
    <property type="glycosylation" value="2 sites, 2 N-linked glycans (2 sites)"/>
</dbReference>
<dbReference type="iPTMnet" id="O35382"/>
<dbReference type="PhosphoSitePlus" id="O35382"/>
<dbReference type="jPOST" id="O35382"/>
<dbReference type="PaxDb" id="10090-ENSMUSP00000051965"/>
<dbReference type="PeptideAtlas" id="O35382"/>
<dbReference type="ProteomicsDB" id="267670"/>
<dbReference type="Pumba" id="O35382"/>
<dbReference type="Antibodypedia" id="18039">
    <property type="antibodies" value="184 antibodies from 28 providers"/>
</dbReference>
<dbReference type="DNASU" id="20336"/>
<dbReference type="Ensembl" id="ENSMUST00000052266.15">
    <property type="protein sequence ID" value="ENSMUSP00000051965.9"/>
    <property type="gene ID" value="ENSMUSG00000029763.18"/>
</dbReference>
<dbReference type="GeneID" id="20336"/>
<dbReference type="KEGG" id="mmu:20336"/>
<dbReference type="UCSC" id="uc009bgs.1">
    <property type="organism name" value="mouse"/>
</dbReference>
<dbReference type="AGR" id="MGI:1096376"/>
<dbReference type="CTD" id="60412"/>
<dbReference type="MGI" id="MGI:1096376">
    <property type="gene designation" value="Exoc4"/>
</dbReference>
<dbReference type="VEuPathDB" id="HostDB:ENSMUSG00000029763"/>
<dbReference type="eggNOG" id="KOG3691">
    <property type="taxonomic scope" value="Eukaryota"/>
</dbReference>
<dbReference type="GeneTree" id="ENSGT00390000001439"/>
<dbReference type="HOGENOM" id="CLU_012416_0_0_1"/>
<dbReference type="InParanoid" id="O35382"/>
<dbReference type="OMA" id="HMEVRCR"/>
<dbReference type="OrthoDB" id="272977at2759"/>
<dbReference type="PhylomeDB" id="O35382"/>
<dbReference type="TreeFam" id="TF313954"/>
<dbReference type="Reactome" id="R-MMU-264876">
    <property type="pathway name" value="Insulin processing"/>
</dbReference>
<dbReference type="Reactome" id="R-MMU-5620916">
    <property type="pathway name" value="VxPx cargo-targeting to cilium"/>
</dbReference>
<dbReference type="BioGRID-ORCS" id="20336">
    <property type="hits" value="16 hits in 79 CRISPR screens"/>
</dbReference>
<dbReference type="CD-CODE" id="CE726F99">
    <property type="entry name" value="Postsynaptic density"/>
</dbReference>
<dbReference type="ChiTaRS" id="Exoc4">
    <property type="organism name" value="mouse"/>
</dbReference>
<dbReference type="PRO" id="PR:O35382"/>
<dbReference type="Proteomes" id="UP000000589">
    <property type="component" value="Chromosome 6"/>
</dbReference>
<dbReference type="RNAct" id="O35382">
    <property type="molecule type" value="protein"/>
</dbReference>
<dbReference type="Bgee" id="ENSMUSG00000029763">
    <property type="expression patterns" value="Expressed in rostral migratory stream and 262 other cell types or tissues"/>
</dbReference>
<dbReference type="ExpressionAtlas" id="O35382">
    <property type="expression patterns" value="baseline and differential"/>
</dbReference>
<dbReference type="GO" id="GO:0005813">
    <property type="term" value="C:centrosome"/>
    <property type="evidence" value="ECO:0000250"/>
    <property type="project" value="UniProtKB"/>
</dbReference>
<dbReference type="GO" id="GO:0000145">
    <property type="term" value="C:exocyst"/>
    <property type="evidence" value="ECO:0000303"/>
    <property type="project" value="ComplexPortal"/>
</dbReference>
<dbReference type="GO" id="GO:0090543">
    <property type="term" value="C:Flemming body"/>
    <property type="evidence" value="ECO:0007669"/>
    <property type="project" value="UniProtKB-SubCell"/>
</dbReference>
<dbReference type="GO" id="GO:0032584">
    <property type="term" value="C:growth cone membrane"/>
    <property type="evidence" value="ECO:0000314"/>
    <property type="project" value="MGI"/>
</dbReference>
<dbReference type="GO" id="GO:0005902">
    <property type="term" value="C:microvillus"/>
    <property type="evidence" value="ECO:0000314"/>
    <property type="project" value="MGI"/>
</dbReference>
<dbReference type="GO" id="GO:0035748">
    <property type="term" value="C:myelin sheath abaxonal region"/>
    <property type="evidence" value="ECO:0000314"/>
    <property type="project" value="BHF-UCL"/>
</dbReference>
<dbReference type="GO" id="GO:0043005">
    <property type="term" value="C:neuron projection"/>
    <property type="evidence" value="ECO:0000314"/>
    <property type="project" value="MGI"/>
</dbReference>
<dbReference type="GO" id="GO:0005886">
    <property type="term" value="C:plasma membrane"/>
    <property type="evidence" value="ECO:0000304"/>
    <property type="project" value="Reactome"/>
</dbReference>
<dbReference type="GO" id="GO:0030165">
    <property type="term" value="F:PDZ domain binding"/>
    <property type="evidence" value="ECO:0000353"/>
    <property type="project" value="UniProtKB"/>
</dbReference>
<dbReference type="GO" id="GO:0090148">
    <property type="term" value="P:membrane fission"/>
    <property type="evidence" value="ECO:0000303"/>
    <property type="project" value="ComplexPortal"/>
</dbReference>
<dbReference type="GO" id="GO:0000281">
    <property type="term" value="P:mitotic cytokinesis"/>
    <property type="evidence" value="ECO:0000303"/>
    <property type="project" value="ComplexPortal"/>
</dbReference>
<dbReference type="GO" id="GO:0048341">
    <property type="term" value="P:paraxial mesoderm formation"/>
    <property type="evidence" value="ECO:0000315"/>
    <property type="project" value="MGI"/>
</dbReference>
<dbReference type="GO" id="GO:0071806">
    <property type="term" value="P:protein transmembrane transport"/>
    <property type="evidence" value="ECO:0000315"/>
    <property type="project" value="MGI"/>
</dbReference>
<dbReference type="GO" id="GO:0006904">
    <property type="term" value="P:vesicle docking involved in exocytosis"/>
    <property type="evidence" value="ECO:0000303"/>
    <property type="project" value="ComplexPortal"/>
</dbReference>
<dbReference type="GO" id="GO:0090522">
    <property type="term" value="P:vesicle tethering involved in exocytosis"/>
    <property type="evidence" value="ECO:0000303"/>
    <property type="project" value="ComplexPortal"/>
</dbReference>
<dbReference type="InterPro" id="IPR039682">
    <property type="entry name" value="Sec8/EXOC4"/>
</dbReference>
<dbReference type="InterPro" id="IPR007191">
    <property type="entry name" value="Sec8_exocyst_N"/>
</dbReference>
<dbReference type="InterPro" id="IPR048630">
    <property type="entry name" value="Sec8_M"/>
</dbReference>
<dbReference type="PANTHER" id="PTHR14146">
    <property type="entry name" value="EXOCYST COMPLEX COMPONENT 4"/>
    <property type="match status" value="1"/>
</dbReference>
<dbReference type="PANTHER" id="PTHR14146:SF0">
    <property type="entry name" value="EXOCYST COMPLEX COMPONENT 4"/>
    <property type="match status" value="1"/>
</dbReference>
<dbReference type="Pfam" id="PF20652">
    <property type="entry name" value="Sec8_C"/>
    <property type="match status" value="1"/>
</dbReference>
<dbReference type="Pfam" id="PF04048">
    <property type="entry name" value="Sec8_N"/>
    <property type="match status" value="1"/>
</dbReference>